<keyword id="KW-1185">Reference proteome</keyword>
<keyword id="KW-0687">Ribonucleoprotein</keyword>
<keyword id="KW-0689">Ribosomal protein</keyword>
<gene>
    <name evidence="1" type="primary">rplQ</name>
    <name type="ordered locus">BL1607</name>
</gene>
<reference key="1">
    <citation type="journal article" date="2002" name="Proc. Natl. Acad. Sci. U.S.A.">
        <title>The genome sequence of Bifidobacterium longum reflects its adaptation to the human gastrointestinal tract.</title>
        <authorList>
            <person name="Schell M.A."/>
            <person name="Karmirantzou M."/>
            <person name="Snel B."/>
            <person name="Vilanova D."/>
            <person name="Berger B."/>
            <person name="Pessi G."/>
            <person name="Zwahlen M.-C."/>
            <person name="Desiere F."/>
            <person name="Bork P."/>
            <person name="Delley M."/>
            <person name="Pridmore R.D."/>
            <person name="Arigoni F."/>
        </authorList>
    </citation>
    <scope>NUCLEOTIDE SEQUENCE [LARGE SCALE GENOMIC DNA]</scope>
    <source>
        <strain>NCC 2705</strain>
    </source>
</reference>
<feature type="chain" id="PRO_1000055774" description="Large ribosomal subunit protein bL17">
    <location>
        <begin position="1"/>
        <end position="177"/>
    </location>
</feature>
<feature type="region of interest" description="Disordered" evidence="2">
    <location>
        <begin position="136"/>
        <end position="177"/>
    </location>
</feature>
<feature type="compositionally biased region" description="Acidic residues" evidence="2">
    <location>
        <begin position="138"/>
        <end position="149"/>
    </location>
</feature>
<feature type="compositionally biased region" description="Low complexity" evidence="2">
    <location>
        <begin position="150"/>
        <end position="164"/>
    </location>
</feature>
<comment type="subunit">
    <text evidence="1">Part of the 50S ribosomal subunit. Contacts protein L32.</text>
</comment>
<comment type="similarity">
    <text evidence="1">Belongs to the bacterial ribosomal protein bL17 family.</text>
</comment>
<accession>Q8G3Z2</accession>
<organism>
    <name type="scientific">Bifidobacterium longum (strain NCC 2705)</name>
    <dbReference type="NCBI Taxonomy" id="206672"/>
    <lineage>
        <taxon>Bacteria</taxon>
        <taxon>Bacillati</taxon>
        <taxon>Actinomycetota</taxon>
        <taxon>Actinomycetes</taxon>
        <taxon>Bifidobacteriales</taxon>
        <taxon>Bifidobacteriaceae</taxon>
        <taxon>Bifidobacterium</taxon>
    </lineage>
</organism>
<protein>
    <recommendedName>
        <fullName evidence="1">Large ribosomal subunit protein bL17</fullName>
    </recommendedName>
    <alternativeName>
        <fullName evidence="3">50S ribosomal protein L17</fullName>
    </alternativeName>
</protein>
<name>RL17_BIFLO</name>
<dbReference type="EMBL" id="AE014295">
    <property type="protein sequence ID" value="AAN25396.1"/>
    <property type="molecule type" value="Genomic_DNA"/>
</dbReference>
<dbReference type="RefSeq" id="NP_696760.1">
    <property type="nucleotide sequence ID" value="NC_004307.2"/>
</dbReference>
<dbReference type="RefSeq" id="WP_011068743.1">
    <property type="nucleotide sequence ID" value="NC_004307.2"/>
</dbReference>
<dbReference type="SMR" id="Q8G3Z2"/>
<dbReference type="STRING" id="206672.BL1607"/>
<dbReference type="EnsemblBacteria" id="AAN25396">
    <property type="protein sequence ID" value="AAN25396"/>
    <property type="gene ID" value="BL1607"/>
</dbReference>
<dbReference type="KEGG" id="blo:BL1607"/>
<dbReference type="PATRIC" id="fig|206672.9.peg.1662"/>
<dbReference type="HOGENOM" id="CLU_074407_0_0_11"/>
<dbReference type="OrthoDB" id="9809073at2"/>
<dbReference type="PhylomeDB" id="Q8G3Z2"/>
<dbReference type="Proteomes" id="UP000000439">
    <property type="component" value="Chromosome"/>
</dbReference>
<dbReference type="GO" id="GO:0022625">
    <property type="term" value="C:cytosolic large ribosomal subunit"/>
    <property type="evidence" value="ECO:0007669"/>
    <property type="project" value="TreeGrafter"/>
</dbReference>
<dbReference type="GO" id="GO:0003735">
    <property type="term" value="F:structural constituent of ribosome"/>
    <property type="evidence" value="ECO:0007669"/>
    <property type="project" value="InterPro"/>
</dbReference>
<dbReference type="GO" id="GO:0006412">
    <property type="term" value="P:translation"/>
    <property type="evidence" value="ECO:0007669"/>
    <property type="project" value="UniProtKB-UniRule"/>
</dbReference>
<dbReference type="FunFam" id="3.90.1030.10:FF:000001">
    <property type="entry name" value="50S ribosomal protein L17"/>
    <property type="match status" value="1"/>
</dbReference>
<dbReference type="Gene3D" id="3.90.1030.10">
    <property type="entry name" value="Ribosomal protein L17"/>
    <property type="match status" value="1"/>
</dbReference>
<dbReference type="HAMAP" id="MF_01368">
    <property type="entry name" value="Ribosomal_bL17"/>
    <property type="match status" value="1"/>
</dbReference>
<dbReference type="InterPro" id="IPR000456">
    <property type="entry name" value="Ribosomal_bL17"/>
</dbReference>
<dbReference type="InterPro" id="IPR047859">
    <property type="entry name" value="Ribosomal_bL17_CS"/>
</dbReference>
<dbReference type="InterPro" id="IPR036373">
    <property type="entry name" value="Ribosomal_bL17_sf"/>
</dbReference>
<dbReference type="NCBIfam" id="TIGR00059">
    <property type="entry name" value="L17"/>
    <property type="match status" value="1"/>
</dbReference>
<dbReference type="PANTHER" id="PTHR14413:SF16">
    <property type="entry name" value="LARGE RIBOSOMAL SUBUNIT PROTEIN BL17M"/>
    <property type="match status" value="1"/>
</dbReference>
<dbReference type="PANTHER" id="PTHR14413">
    <property type="entry name" value="RIBOSOMAL PROTEIN L17"/>
    <property type="match status" value="1"/>
</dbReference>
<dbReference type="Pfam" id="PF01196">
    <property type="entry name" value="Ribosomal_L17"/>
    <property type="match status" value="1"/>
</dbReference>
<dbReference type="SUPFAM" id="SSF64263">
    <property type="entry name" value="Prokaryotic ribosomal protein L17"/>
    <property type="match status" value="1"/>
</dbReference>
<dbReference type="PROSITE" id="PS01167">
    <property type="entry name" value="RIBOSOMAL_L17"/>
    <property type="match status" value="1"/>
</dbReference>
<evidence type="ECO:0000255" key="1">
    <source>
        <dbReference type="HAMAP-Rule" id="MF_01368"/>
    </source>
</evidence>
<evidence type="ECO:0000256" key="2">
    <source>
        <dbReference type="SAM" id="MobiDB-lite"/>
    </source>
</evidence>
<evidence type="ECO:0000305" key="3"/>
<sequence length="177" mass="19121">MPTPKKGPRLASSPAHERLMLANMATSLFQNGRITTTLPKAKRLRPLAERLITFAKRGDLHSRRRVMRVIRNKSVVHILFTQIAEQMEQREGGYTRIVKIAPRVGDAAPAAVIELVTEPVAKKAVVKEAEAAAKVAEEEAPAVEAEATEAVEAPVEETAAAEAEAPAEEAADAEKAE</sequence>
<proteinExistence type="inferred from homology"/>